<organism>
    <name type="scientific">Bacillus subtilis (strain 168)</name>
    <dbReference type="NCBI Taxonomy" id="224308"/>
    <lineage>
        <taxon>Bacteria</taxon>
        <taxon>Bacillati</taxon>
        <taxon>Bacillota</taxon>
        <taxon>Bacilli</taxon>
        <taxon>Bacillales</taxon>
        <taxon>Bacillaceae</taxon>
        <taxon>Bacillus</taxon>
    </lineage>
</organism>
<sequence>MNIYKPAGFWIRLGAALLDYIIVSVPLLLIYWLITGKDPNDSMFISLVVLLYSILLPMFWRGYLIGKRICGIRIVKKDGSQVSLLTMFLRVIVAGLVYCITFGLGLIASLILIAVREDKRTLHDLIAGTYVTYATPGEEELNADEEIRKSE</sequence>
<reference key="1">
    <citation type="journal article" date="1996" name="Microbiology">
        <title>The 25 degrees-36 degrees region of the Bacillus subtilis chromosome: determination of the sequence of a 146 kb segment and identification of 113 genes.</title>
        <authorList>
            <person name="Yamane K."/>
            <person name="Kumano M."/>
            <person name="Kurita K."/>
        </authorList>
    </citation>
    <scope>NUCLEOTIDE SEQUENCE [GENOMIC DNA]</scope>
    <source>
        <strain>168</strain>
    </source>
</reference>
<reference key="2">
    <citation type="journal article" date="1997" name="Nature">
        <title>The complete genome sequence of the Gram-positive bacterium Bacillus subtilis.</title>
        <authorList>
            <person name="Kunst F."/>
            <person name="Ogasawara N."/>
            <person name="Moszer I."/>
            <person name="Albertini A.M."/>
            <person name="Alloni G."/>
            <person name="Azevedo V."/>
            <person name="Bertero M.G."/>
            <person name="Bessieres P."/>
            <person name="Bolotin A."/>
            <person name="Borchert S."/>
            <person name="Borriss R."/>
            <person name="Boursier L."/>
            <person name="Brans A."/>
            <person name="Braun M."/>
            <person name="Brignell S.C."/>
            <person name="Bron S."/>
            <person name="Brouillet S."/>
            <person name="Bruschi C.V."/>
            <person name="Caldwell B."/>
            <person name="Capuano V."/>
            <person name="Carter N.M."/>
            <person name="Choi S.-K."/>
            <person name="Codani J.-J."/>
            <person name="Connerton I.F."/>
            <person name="Cummings N.J."/>
            <person name="Daniel R.A."/>
            <person name="Denizot F."/>
            <person name="Devine K.M."/>
            <person name="Duesterhoeft A."/>
            <person name="Ehrlich S.D."/>
            <person name="Emmerson P.T."/>
            <person name="Entian K.-D."/>
            <person name="Errington J."/>
            <person name="Fabret C."/>
            <person name="Ferrari E."/>
            <person name="Foulger D."/>
            <person name="Fritz C."/>
            <person name="Fujita M."/>
            <person name="Fujita Y."/>
            <person name="Fuma S."/>
            <person name="Galizzi A."/>
            <person name="Galleron N."/>
            <person name="Ghim S.-Y."/>
            <person name="Glaser P."/>
            <person name="Goffeau A."/>
            <person name="Golightly E.J."/>
            <person name="Grandi G."/>
            <person name="Guiseppi G."/>
            <person name="Guy B.J."/>
            <person name="Haga K."/>
            <person name="Haiech J."/>
            <person name="Harwood C.R."/>
            <person name="Henaut A."/>
            <person name="Hilbert H."/>
            <person name="Holsappel S."/>
            <person name="Hosono S."/>
            <person name="Hullo M.-F."/>
            <person name="Itaya M."/>
            <person name="Jones L.-M."/>
            <person name="Joris B."/>
            <person name="Karamata D."/>
            <person name="Kasahara Y."/>
            <person name="Klaerr-Blanchard M."/>
            <person name="Klein C."/>
            <person name="Kobayashi Y."/>
            <person name="Koetter P."/>
            <person name="Koningstein G."/>
            <person name="Krogh S."/>
            <person name="Kumano M."/>
            <person name="Kurita K."/>
            <person name="Lapidus A."/>
            <person name="Lardinois S."/>
            <person name="Lauber J."/>
            <person name="Lazarevic V."/>
            <person name="Lee S.-M."/>
            <person name="Levine A."/>
            <person name="Liu H."/>
            <person name="Masuda S."/>
            <person name="Mauel C."/>
            <person name="Medigue C."/>
            <person name="Medina N."/>
            <person name="Mellado R.P."/>
            <person name="Mizuno M."/>
            <person name="Moestl D."/>
            <person name="Nakai S."/>
            <person name="Noback M."/>
            <person name="Noone D."/>
            <person name="O'Reilly M."/>
            <person name="Ogawa K."/>
            <person name="Ogiwara A."/>
            <person name="Oudega B."/>
            <person name="Park S.-H."/>
            <person name="Parro V."/>
            <person name="Pohl T.M."/>
            <person name="Portetelle D."/>
            <person name="Porwollik S."/>
            <person name="Prescott A.M."/>
            <person name="Presecan E."/>
            <person name="Pujic P."/>
            <person name="Purnelle B."/>
            <person name="Rapoport G."/>
            <person name="Rey M."/>
            <person name="Reynolds S."/>
            <person name="Rieger M."/>
            <person name="Rivolta C."/>
            <person name="Rocha E."/>
            <person name="Roche B."/>
            <person name="Rose M."/>
            <person name="Sadaie Y."/>
            <person name="Sato T."/>
            <person name="Scanlan E."/>
            <person name="Schleich S."/>
            <person name="Schroeter R."/>
            <person name="Scoffone F."/>
            <person name="Sekiguchi J."/>
            <person name="Sekowska A."/>
            <person name="Seror S.J."/>
            <person name="Serror P."/>
            <person name="Shin B.-S."/>
            <person name="Soldo B."/>
            <person name="Sorokin A."/>
            <person name="Tacconi E."/>
            <person name="Takagi T."/>
            <person name="Takahashi H."/>
            <person name="Takemaru K."/>
            <person name="Takeuchi M."/>
            <person name="Tamakoshi A."/>
            <person name="Tanaka T."/>
            <person name="Terpstra P."/>
            <person name="Tognoni A."/>
            <person name="Tosato V."/>
            <person name="Uchiyama S."/>
            <person name="Vandenbol M."/>
            <person name="Vannier F."/>
            <person name="Vassarotti A."/>
            <person name="Viari A."/>
            <person name="Wambutt R."/>
            <person name="Wedler E."/>
            <person name="Wedler H."/>
            <person name="Weitzenegger T."/>
            <person name="Winters P."/>
            <person name="Wipat A."/>
            <person name="Yamamoto H."/>
            <person name="Yamane K."/>
            <person name="Yasumoto K."/>
            <person name="Yata K."/>
            <person name="Yoshida K."/>
            <person name="Yoshikawa H.-F."/>
            <person name="Zumstein E."/>
            <person name="Yoshikawa H."/>
            <person name="Danchin A."/>
        </authorList>
    </citation>
    <scope>NUCLEOTIDE SEQUENCE [LARGE SCALE GENOMIC DNA]</scope>
    <source>
        <strain>168</strain>
    </source>
</reference>
<reference key="3">
    <citation type="journal article" date="1995" name="Microbiology">
        <title>A 10 kb nucleotide sequence at the 5' flanking region (32 degrees) of srfAA of the Bacillus subtilis chromosome.</title>
        <authorList>
            <person name="Fujishima Y."/>
            <person name="Yamane K."/>
        </authorList>
    </citation>
    <scope>NUCLEOTIDE SEQUENCE [GENOMIC DNA] OF 43-151</scope>
    <source>
        <strain>168</strain>
    </source>
</reference>
<evidence type="ECO:0000255" key="1"/>
<evidence type="ECO:0000305" key="2"/>
<dbReference type="EMBL" id="D50453">
    <property type="protein sequence ID" value="BAA08973.1"/>
    <property type="molecule type" value="Genomic_DNA"/>
</dbReference>
<dbReference type="EMBL" id="AL009126">
    <property type="protein sequence ID" value="CAB12133.1"/>
    <property type="molecule type" value="Genomic_DNA"/>
</dbReference>
<dbReference type="EMBL" id="D30762">
    <property type="protein sequence ID" value="BAA06427.1"/>
    <property type="molecule type" value="Genomic_DNA"/>
</dbReference>
<dbReference type="PIR" id="E69760">
    <property type="entry name" value="E69760"/>
</dbReference>
<dbReference type="RefSeq" id="NP_388221.1">
    <property type="nucleotide sequence ID" value="NC_000964.3"/>
</dbReference>
<dbReference type="RefSeq" id="WP_003246356.1">
    <property type="nucleotide sequence ID" value="NZ_OZ025638.1"/>
</dbReference>
<dbReference type="FunCoup" id="P42401">
    <property type="interactions" value="6"/>
</dbReference>
<dbReference type="STRING" id="224308.BSU03390"/>
<dbReference type="TCDB" id="2.A.133.1.11">
    <property type="family name" value="the rdd na+(li+)(k+)/h+ antiporter (rdd) family"/>
</dbReference>
<dbReference type="PaxDb" id="224308-BSU03390"/>
<dbReference type="EnsemblBacteria" id="CAB12133">
    <property type="protein sequence ID" value="CAB12133"/>
    <property type="gene ID" value="BSU_03390"/>
</dbReference>
<dbReference type="GeneID" id="938315"/>
<dbReference type="KEGG" id="bsu:BSU03390"/>
<dbReference type="PATRIC" id="fig|224308.179.peg.356"/>
<dbReference type="eggNOG" id="COG1714">
    <property type="taxonomic scope" value="Bacteria"/>
</dbReference>
<dbReference type="InParanoid" id="P42401"/>
<dbReference type="OrthoDB" id="1787043at2"/>
<dbReference type="BioCyc" id="BSUB:BSU03390-MONOMER"/>
<dbReference type="Proteomes" id="UP000001570">
    <property type="component" value="Chromosome"/>
</dbReference>
<dbReference type="GO" id="GO:0005886">
    <property type="term" value="C:plasma membrane"/>
    <property type="evidence" value="ECO:0007669"/>
    <property type="project" value="UniProtKB-SubCell"/>
</dbReference>
<dbReference type="InterPro" id="IPR051791">
    <property type="entry name" value="Pra-immunoreactive"/>
</dbReference>
<dbReference type="InterPro" id="IPR010432">
    <property type="entry name" value="RDD"/>
</dbReference>
<dbReference type="PANTHER" id="PTHR36115:SF9">
    <property type="entry name" value="LMO1584 PROTEIN"/>
    <property type="match status" value="1"/>
</dbReference>
<dbReference type="PANTHER" id="PTHR36115">
    <property type="entry name" value="PROLINE-RICH ANTIGEN HOMOLOG-RELATED"/>
    <property type="match status" value="1"/>
</dbReference>
<dbReference type="Pfam" id="PF06271">
    <property type="entry name" value="RDD"/>
    <property type="match status" value="1"/>
</dbReference>
<comment type="subcellular location">
    <subcellularLocation>
        <location evidence="2">Cell membrane</location>
        <topology evidence="2">Multi-pass membrane protein</topology>
    </subcellularLocation>
</comment>
<name>YCKC_BACSU</name>
<keyword id="KW-1003">Cell membrane</keyword>
<keyword id="KW-0472">Membrane</keyword>
<keyword id="KW-1185">Reference proteome</keyword>
<keyword id="KW-0812">Transmembrane</keyword>
<keyword id="KW-1133">Transmembrane helix</keyword>
<accession>P42401</accession>
<gene>
    <name type="primary">yckC</name>
    <name type="ordered locus">BSU03390</name>
</gene>
<protein>
    <recommendedName>
        <fullName>Uncharacterized protein YckC</fullName>
    </recommendedName>
    <alternativeName>
        <fullName>ORF3</fullName>
    </alternativeName>
</protein>
<feature type="chain" id="PRO_0000049478" description="Uncharacterized protein YckC">
    <location>
        <begin position="1"/>
        <end position="151"/>
    </location>
</feature>
<feature type="transmembrane region" description="Helical" evidence="1">
    <location>
        <begin position="14"/>
        <end position="34"/>
    </location>
</feature>
<feature type="transmembrane region" description="Helical" evidence="1">
    <location>
        <begin position="45"/>
        <end position="65"/>
    </location>
</feature>
<feature type="transmembrane region" description="Helical" evidence="1">
    <location>
        <begin position="91"/>
        <end position="111"/>
    </location>
</feature>
<proteinExistence type="predicted"/>